<feature type="chain" id="PRO_1000084951" description="DNA polymerase IV">
    <location>
        <begin position="1"/>
        <end position="354"/>
    </location>
</feature>
<feature type="domain" description="UmuC" evidence="1">
    <location>
        <begin position="14"/>
        <end position="198"/>
    </location>
</feature>
<feature type="active site" evidence="1">
    <location>
        <position position="117"/>
    </location>
</feature>
<feature type="binding site" evidence="1">
    <location>
        <position position="18"/>
    </location>
    <ligand>
        <name>Mg(2+)</name>
        <dbReference type="ChEBI" id="CHEBI:18420"/>
    </ligand>
</feature>
<feature type="binding site" evidence="1">
    <location>
        <position position="116"/>
    </location>
    <ligand>
        <name>Mg(2+)</name>
        <dbReference type="ChEBI" id="CHEBI:18420"/>
    </ligand>
</feature>
<feature type="site" description="Substrate discrimination" evidence="1">
    <location>
        <position position="23"/>
    </location>
</feature>
<dbReference type="EC" id="2.7.7.7" evidence="1"/>
<dbReference type="EMBL" id="CP000725">
    <property type="protein sequence ID" value="ABV09189.1"/>
    <property type="molecule type" value="Genomic_DNA"/>
</dbReference>
<dbReference type="RefSeq" id="WP_011999779.1">
    <property type="nucleotide sequence ID" value="NC_009785.1"/>
</dbReference>
<dbReference type="SMR" id="A8AUV7"/>
<dbReference type="STRING" id="467705.SGO_0248"/>
<dbReference type="KEGG" id="sgo:SGO_0248"/>
<dbReference type="eggNOG" id="COG0389">
    <property type="taxonomic scope" value="Bacteria"/>
</dbReference>
<dbReference type="HOGENOM" id="CLU_012348_1_2_9"/>
<dbReference type="Proteomes" id="UP000001131">
    <property type="component" value="Chromosome"/>
</dbReference>
<dbReference type="GO" id="GO:0005829">
    <property type="term" value="C:cytosol"/>
    <property type="evidence" value="ECO:0007669"/>
    <property type="project" value="TreeGrafter"/>
</dbReference>
<dbReference type="GO" id="GO:0003684">
    <property type="term" value="F:damaged DNA binding"/>
    <property type="evidence" value="ECO:0007669"/>
    <property type="project" value="InterPro"/>
</dbReference>
<dbReference type="GO" id="GO:0003887">
    <property type="term" value="F:DNA-directed DNA polymerase activity"/>
    <property type="evidence" value="ECO:0007669"/>
    <property type="project" value="UniProtKB-UniRule"/>
</dbReference>
<dbReference type="GO" id="GO:0000287">
    <property type="term" value="F:magnesium ion binding"/>
    <property type="evidence" value="ECO:0007669"/>
    <property type="project" value="UniProtKB-UniRule"/>
</dbReference>
<dbReference type="GO" id="GO:0006261">
    <property type="term" value="P:DNA-templated DNA replication"/>
    <property type="evidence" value="ECO:0007669"/>
    <property type="project" value="UniProtKB-UniRule"/>
</dbReference>
<dbReference type="GO" id="GO:0042276">
    <property type="term" value="P:error-prone translesion synthesis"/>
    <property type="evidence" value="ECO:0007669"/>
    <property type="project" value="TreeGrafter"/>
</dbReference>
<dbReference type="GO" id="GO:0009432">
    <property type="term" value="P:SOS response"/>
    <property type="evidence" value="ECO:0007669"/>
    <property type="project" value="TreeGrafter"/>
</dbReference>
<dbReference type="CDD" id="cd03586">
    <property type="entry name" value="PolY_Pol_IV_kappa"/>
    <property type="match status" value="1"/>
</dbReference>
<dbReference type="FunFam" id="3.30.1490.100:FF:000004">
    <property type="entry name" value="DNA polymerase IV"/>
    <property type="match status" value="1"/>
</dbReference>
<dbReference type="FunFam" id="3.40.1170.60:FF:000001">
    <property type="entry name" value="DNA polymerase IV"/>
    <property type="match status" value="1"/>
</dbReference>
<dbReference type="Gene3D" id="3.30.70.270">
    <property type="match status" value="1"/>
</dbReference>
<dbReference type="Gene3D" id="3.40.1170.60">
    <property type="match status" value="1"/>
</dbReference>
<dbReference type="Gene3D" id="1.10.150.20">
    <property type="entry name" value="5' to 3' exonuclease, C-terminal subdomain"/>
    <property type="match status" value="1"/>
</dbReference>
<dbReference type="Gene3D" id="3.30.1490.100">
    <property type="entry name" value="DNA polymerase, Y-family, little finger domain"/>
    <property type="match status" value="1"/>
</dbReference>
<dbReference type="HAMAP" id="MF_01113">
    <property type="entry name" value="DNApol_IV"/>
    <property type="match status" value="1"/>
</dbReference>
<dbReference type="InterPro" id="IPR043502">
    <property type="entry name" value="DNA/RNA_pol_sf"/>
</dbReference>
<dbReference type="InterPro" id="IPR036775">
    <property type="entry name" value="DNA_pol_Y-fam_lit_finger_sf"/>
</dbReference>
<dbReference type="InterPro" id="IPR017961">
    <property type="entry name" value="DNA_pol_Y-fam_little_finger"/>
</dbReference>
<dbReference type="InterPro" id="IPR050116">
    <property type="entry name" value="DNA_polymerase-Y"/>
</dbReference>
<dbReference type="InterPro" id="IPR022880">
    <property type="entry name" value="DNApol_IV"/>
</dbReference>
<dbReference type="InterPro" id="IPR024728">
    <property type="entry name" value="PolY_HhH_motif"/>
</dbReference>
<dbReference type="InterPro" id="IPR043128">
    <property type="entry name" value="Rev_trsase/Diguanyl_cyclase"/>
</dbReference>
<dbReference type="InterPro" id="IPR001126">
    <property type="entry name" value="UmuC"/>
</dbReference>
<dbReference type="NCBIfam" id="NF002677">
    <property type="entry name" value="PRK02406.1"/>
    <property type="match status" value="1"/>
</dbReference>
<dbReference type="NCBIfam" id="NF010731">
    <property type="entry name" value="PRK14133.1"/>
    <property type="match status" value="1"/>
</dbReference>
<dbReference type="PANTHER" id="PTHR11076:SF33">
    <property type="entry name" value="DNA POLYMERASE KAPPA"/>
    <property type="match status" value="1"/>
</dbReference>
<dbReference type="PANTHER" id="PTHR11076">
    <property type="entry name" value="DNA REPAIR POLYMERASE UMUC / TRANSFERASE FAMILY MEMBER"/>
    <property type="match status" value="1"/>
</dbReference>
<dbReference type="Pfam" id="PF00817">
    <property type="entry name" value="IMS"/>
    <property type="match status" value="1"/>
</dbReference>
<dbReference type="Pfam" id="PF11799">
    <property type="entry name" value="IMS_C"/>
    <property type="match status" value="1"/>
</dbReference>
<dbReference type="Pfam" id="PF11798">
    <property type="entry name" value="IMS_HHH"/>
    <property type="match status" value="1"/>
</dbReference>
<dbReference type="SUPFAM" id="SSF56672">
    <property type="entry name" value="DNA/RNA polymerases"/>
    <property type="match status" value="1"/>
</dbReference>
<dbReference type="SUPFAM" id="SSF100879">
    <property type="entry name" value="Lesion bypass DNA polymerase (Y-family), little finger domain"/>
    <property type="match status" value="1"/>
</dbReference>
<dbReference type="PROSITE" id="PS50173">
    <property type="entry name" value="UMUC"/>
    <property type="match status" value="1"/>
</dbReference>
<gene>
    <name evidence="1" type="primary">dinB</name>
    <name type="ordered locus">SGO_0248</name>
</gene>
<protein>
    <recommendedName>
        <fullName evidence="1">DNA polymerase IV</fullName>
        <shortName evidence="1">Pol IV</shortName>
        <ecNumber evidence="1">2.7.7.7</ecNumber>
    </recommendedName>
</protein>
<comment type="function">
    <text evidence="1">Poorly processive, error-prone DNA polymerase involved in untargeted mutagenesis. Copies undamaged DNA at stalled replication forks, which arise in vivo from mismatched or misaligned primer ends. These misaligned primers can be extended by PolIV. Exhibits no 3'-5' exonuclease (proofreading) activity. May be involved in translesional synthesis, in conjunction with the beta clamp from PolIII.</text>
</comment>
<comment type="catalytic activity">
    <reaction evidence="1">
        <text>DNA(n) + a 2'-deoxyribonucleoside 5'-triphosphate = DNA(n+1) + diphosphate</text>
        <dbReference type="Rhea" id="RHEA:22508"/>
        <dbReference type="Rhea" id="RHEA-COMP:17339"/>
        <dbReference type="Rhea" id="RHEA-COMP:17340"/>
        <dbReference type="ChEBI" id="CHEBI:33019"/>
        <dbReference type="ChEBI" id="CHEBI:61560"/>
        <dbReference type="ChEBI" id="CHEBI:173112"/>
        <dbReference type="EC" id="2.7.7.7"/>
    </reaction>
</comment>
<comment type="cofactor">
    <cofactor evidence="1">
        <name>Mg(2+)</name>
        <dbReference type="ChEBI" id="CHEBI:18420"/>
    </cofactor>
    <text evidence="1">Binds 2 magnesium ions per subunit.</text>
</comment>
<comment type="subunit">
    <text evidence="1">Monomer.</text>
</comment>
<comment type="subcellular location">
    <subcellularLocation>
        <location evidence="1">Cytoplasm</location>
    </subcellularLocation>
</comment>
<comment type="similarity">
    <text evidence="1">Belongs to the DNA polymerase type-Y family.</text>
</comment>
<keyword id="KW-0963">Cytoplasm</keyword>
<keyword id="KW-0227">DNA damage</keyword>
<keyword id="KW-0234">DNA repair</keyword>
<keyword id="KW-0235">DNA replication</keyword>
<keyword id="KW-0238">DNA-binding</keyword>
<keyword id="KW-0239">DNA-directed DNA polymerase</keyword>
<keyword id="KW-0460">Magnesium</keyword>
<keyword id="KW-0479">Metal-binding</keyword>
<keyword id="KW-0515">Mutator protein</keyword>
<keyword id="KW-0548">Nucleotidyltransferase</keyword>
<keyword id="KW-1185">Reference proteome</keyword>
<keyword id="KW-0808">Transferase</keyword>
<name>DPO4_STRGC</name>
<proteinExistence type="inferred from homology"/>
<evidence type="ECO:0000255" key="1">
    <source>
        <dbReference type="HAMAP-Rule" id="MF_01113"/>
    </source>
</evidence>
<reference key="1">
    <citation type="journal article" date="2007" name="J. Bacteriol.">
        <title>Genome-wide transcriptional changes in Streptococcus gordonii in response to competence signaling peptide.</title>
        <authorList>
            <person name="Vickerman M.M."/>
            <person name="Iobst S."/>
            <person name="Jesionowski A.M."/>
            <person name="Gill S.R."/>
        </authorList>
    </citation>
    <scope>NUCLEOTIDE SEQUENCE [LARGE SCALE GENOMIC DNA]</scope>
    <source>
        <strain>Challis / ATCC 35105 / BCRC 15272 / CH1 / DL1 / V288</strain>
    </source>
</reference>
<organism>
    <name type="scientific">Streptococcus gordonii (strain Challis / ATCC 35105 / BCRC 15272 / CH1 / DL1 / V288)</name>
    <dbReference type="NCBI Taxonomy" id="467705"/>
    <lineage>
        <taxon>Bacteria</taxon>
        <taxon>Bacillati</taxon>
        <taxon>Bacillota</taxon>
        <taxon>Bacilli</taxon>
        <taxon>Lactobacillales</taxon>
        <taxon>Streptococcaceae</taxon>
        <taxon>Streptococcus</taxon>
    </lineage>
</organism>
<sequence>MLIFPLINDTSRKIIHIDMDAFFAAVEVRDNPKLKGHPVIIGSDPRLTGGRGVVSTCNYEARKFGVHSAMSSKEAYERCPQGIFISGNYEKYQAVGLQIREIFKRYTDLIEPMSIDEAYLDVTENKLGIKSAVKIAKLIQHDIWNELQLTASAGVSYNKFLAKIASDYEKPHGLTVILPEEAEAFLAPMDIAKFHGVGNKSVEKLHEMGVYTGADLLKIPEMTLIDKFGRFGFDLYRKARGISNSPVKSNRIRKSIGKERTYAKLLYSEEDIKKELTLLAQKVENSLIKHDKKGRTIVLKIRYADFSTLTKRKSLNLATRDKKQIERTAHEIYDSLEEQPRGIRLLGLTVTGFE</sequence>
<accession>A8AUV7</accession>